<gene>
    <name type="primary">tmem147</name>
    <name type="ORF">zgc:92863</name>
</gene>
<sequence length="225" mass="25459">MTLFHFGNCFSLAYFPYFITYKCSGLSEYNAFWRCVQAGATYLFVRLCKMLFLATFFPTWEGGAGVYDFVGEFMKATVDMADLLGLHLVMSRNAGKGEYKIMVAAMGWATAELIMSRCIPLWVGARGIEFDWKYIQMSFDSNISLVHYIAMAAVVWMFTRYDLPKSFRLPVAILLGLCVYKGFLMELFVHVFLLGSWTALLVKAVLTGAISLCSLFLFVTLVHSN</sequence>
<keyword id="KW-1003">Cell membrane</keyword>
<keyword id="KW-0256">Endoplasmic reticulum</keyword>
<keyword id="KW-0472">Membrane</keyword>
<keyword id="KW-1185">Reference proteome</keyword>
<keyword id="KW-0812">Transmembrane</keyword>
<keyword id="KW-1133">Transmembrane helix</keyword>
<comment type="function">
    <text evidence="3">Component of the multi-pass translocon (MPT) complex that mediates insertion of multi-pass membrane proteins into the lipid bilayer of membranes. The MPT complex takes over after the SEC61 complex: following membrane insertion of the first few transmembrane segments of proteins by the SEC61 complex, the MPT complex occludes the lateral gate of the SEC61 complex to promote insertion of subsequent transmembrane regions.</text>
</comment>
<comment type="subunit">
    <text evidence="3">Component of the multi-pass translocon (MPT) complex.</text>
</comment>
<comment type="subcellular location">
    <subcellularLocation>
        <location evidence="3">Endoplasmic reticulum membrane</location>
        <topology evidence="4">Multi-pass membrane protein</topology>
    </subcellularLocation>
    <subcellularLocation>
        <location evidence="2">Cell membrane</location>
        <topology evidence="4">Multi-pass membrane protein</topology>
    </subcellularLocation>
</comment>
<comment type="similarity">
    <text evidence="5">Belongs to the TMEM147 family.</text>
</comment>
<dbReference type="EMBL" id="BC076325">
    <property type="protein sequence ID" value="AAH76325.1"/>
    <property type="molecule type" value="mRNA"/>
</dbReference>
<dbReference type="RefSeq" id="NP_001002484.1">
    <property type="nucleotide sequence ID" value="NM_001002484.1"/>
</dbReference>
<dbReference type="SMR" id="Q6DGL7"/>
<dbReference type="FunCoup" id="Q6DGL7">
    <property type="interactions" value="2398"/>
</dbReference>
<dbReference type="STRING" id="7955.ENSDARP00000058382"/>
<dbReference type="PaxDb" id="7955-ENSDARP00000058382"/>
<dbReference type="GeneID" id="436757"/>
<dbReference type="KEGG" id="dre:436757"/>
<dbReference type="AGR" id="ZFIN:ZDB-GENE-040718-187"/>
<dbReference type="CTD" id="10430"/>
<dbReference type="ZFIN" id="ZDB-GENE-040718-187">
    <property type="gene designation" value="tmem147"/>
</dbReference>
<dbReference type="eggNOG" id="KOG3236">
    <property type="taxonomic scope" value="Eukaryota"/>
</dbReference>
<dbReference type="InParanoid" id="Q6DGL7"/>
<dbReference type="OrthoDB" id="9993532at2759"/>
<dbReference type="PhylomeDB" id="Q6DGL7"/>
<dbReference type="PRO" id="PR:Q6DGL7"/>
<dbReference type="Proteomes" id="UP000000437">
    <property type="component" value="Chromosome 16"/>
</dbReference>
<dbReference type="GO" id="GO:0005789">
    <property type="term" value="C:endoplasmic reticulum membrane"/>
    <property type="evidence" value="ECO:0000250"/>
    <property type="project" value="UniProtKB"/>
</dbReference>
<dbReference type="GO" id="GO:0031965">
    <property type="term" value="C:nuclear membrane"/>
    <property type="evidence" value="ECO:0000250"/>
    <property type="project" value="UniProtKB"/>
</dbReference>
<dbReference type="GO" id="GO:0005886">
    <property type="term" value="C:plasma membrane"/>
    <property type="evidence" value="ECO:0000250"/>
    <property type="project" value="UniProtKB"/>
</dbReference>
<dbReference type="GO" id="GO:0043022">
    <property type="term" value="F:ribosome binding"/>
    <property type="evidence" value="ECO:0000250"/>
    <property type="project" value="UniProtKB"/>
</dbReference>
<dbReference type="GO" id="GO:0160063">
    <property type="term" value="P:multi-pass transmembrane protein insertion into ER membrane"/>
    <property type="evidence" value="ECO:0000250"/>
    <property type="project" value="UniProtKB"/>
</dbReference>
<dbReference type="GO" id="GO:0036228">
    <property type="term" value="P:protein localization to nuclear inner membrane"/>
    <property type="evidence" value="ECO:0000250"/>
    <property type="project" value="UniProtKB"/>
</dbReference>
<dbReference type="InterPro" id="IPR019164">
    <property type="entry name" value="TMEM147"/>
</dbReference>
<dbReference type="PANTHER" id="PTHR12869:SF0">
    <property type="entry name" value="BOS COMPLEX SUBUNIT TMEM147"/>
    <property type="match status" value="1"/>
</dbReference>
<dbReference type="PANTHER" id="PTHR12869">
    <property type="entry name" value="SMALL SEVEN TRANSMEMBRANE DOMAIN-CONTAINING PROTEIN"/>
    <property type="match status" value="1"/>
</dbReference>
<dbReference type="Pfam" id="PF09767">
    <property type="entry name" value="DUF2053"/>
    <property type="match status" value="1"/>
</dbReference>
<proteinExistence type="evidence at transcript level"/>
<feature type="chain" id="PRO_0000271704" description="BOS complex subunit TMEM147">
    <location>
        <begin position="1"/>
        <end position="225"/>
    </location>
</feature>
<feature type="transmembrane region" description="Helical" evidence="1">
    <location>
        <begin position="1"/>
        <end position="21"/>
    </location>
</feature>
<feature type="topological domain" description="Cytoplasmic" evidence="1">
    <location>
        <begin position="22"/>
        <end position="34"/>
    </location>
</feature>
<feature type="transmembrane region" description="Helical" evidence="1">
    <location>
        <begin position="35"/>
        <end position="58"/>
    </location>
</feature>
<feature type="topological domain" description="Lumenal" evidence="1">
    <location>
        <begin position="59"/>
        <end position="68"/>
    </location>
</feature>
<feature type="transmembrane region" description="Helical" evidence="1">
    <location>
        <begin position="69"/>
        <end position="90"/>
    </location>
</feature>
<feature type="topological domain" description="Cytoplasmic" evidence="1">
    <location>
        <begin position="91"/>
        <end position="100"/>
    </location>
</feature>
<feature type="transmembrane region" description="Helical" evidence="1">
    <location>
        <begin position="101"/>
        <end position="126"/>
    </location>
</feature>
<feature type="topological domain" description="Lumenal" evidence="1">
    <location>
        <begin position="127"/>
        <end position="131"/>
    </location>
</feature>
<feature type="transmembrane region" description="Helical" evidence="1">
    <location>
        <begin position="132"/>
        <end position="157"/>
    </location>
</feature>
<feature type="topological domain" description="Cytoplasmic" evidence="1">
    <location>
        <begin position="158"/>
        <end position="166"/>
    </location>
</feature>
<feature type="transmembrane region" description="Helical" evidence="1">
    <location>
        <begin position="167"/>
        <end position="189"/>
    </location>
</feature>
<feature type="topological domain" description="Lumenal" evidence="1">
    <location>
        <begin position="190"/>
        <end position="196"/>
    </location>
</feature>
<feature type="transmembrane region" description="Helical" evidence="1">
    <location>
        <begin position="197"/>
        <end position="218"/>
    </location>
</feature>
<feature type="topological domain" description="Cytoplasmic" evidence="1">
    <location>
        <begin position="219"/>
        <end position="225"/>
    </location>
</feature>
<name>TM147_DANRE</name>
<organism>
    <name type="scientific">Danio rerio</name>
    <name type="common">Zebrafish</name>
    <name type="synonym">Brachydanio rerio</name>
    <dbReference type="NCBI Taxonomy" id="7955"/>
    <lineage>
        <taxon>Eukaryota</taxon>
        <taxon>Metazoa</taxon>
        <taxon>Chordata</taxon>
        <taxon>Craniata</taxon>
        <taxon>Vertebrata</taxon>
        <taxon>Euteleostomi</taxon>
        <taxon>Actinopterygii</taxon>
        <taxon>Neopterygii</taxon>
        <taxon>Teleostei</taxon>
        <taxon>Ostariophysi</taxon>
        <taxon>Cypriniformes</taxon>
        <taxon>Danionidae</taxon>
        <taxon>Danioninae</taxon>
        <taxon>Danio</taxon>
    </lineage>
</organism>
<protein>
    <recommendedName>
        <fullName evidence="5">BOS complex subunit TMEM147</fullName>
    </recommendedName>
    <alternativeName>
        <fullName evidence="5">Transmembrane protein 147</fullName>
    </alternativeName>
</protein>
<reference key="1">
    <citation type="submission" date="2004-07" db="EMBL/GenBank/DDBJ databases">
        <authorList>
            <consortium name="NIH - Zebrafish Gene Collection (ZGC) project"/>
        </authorList>
    </citation>
    <scope>NUCLEOTIDE SEQUENCE [LARGE SCALE MRNA]</scope>
    <source>
        <tissue>Brain</tissue>
    </source>
</reference>
<accession>Q6DGL7</accession>
<evidence type="ECO:0000250" key="1">
    <source>
        <dbReference type="UniProtKB" id="A0A8I3MKU8"/>
    </source>
</evidence>
<evidence type="ECO:0000250" key="2">
    <source>
        <dbReference type="UniProtKB" id="I6VSD2"/>
    </source>
</evidence>
<evidence type="ECO:0000250" key="3">
    <source>
        <dbReference type="UniProtKB" id="Q9BVK8"/>
    </source>
</evidence>
<evidence type="ECO:0000255" key="4"/>
<evidence type="ECO:0000305" key="5"/>